<protein>
    <recommendedName>
        <fullName>Histone H3.2</fullName>
    </recommendedName>
</protein>
<accession>P68427</accession>
<accession>P02300</accession>
<reference key="1">
    <citation type="journal article" date="1973" name="J. Biol. Chem.">
        <title>Histone 3. V. The amino acid sequence of pea embryo histone 3.</title>
        <authorList>
            <person name="Patthy L."/>
            <person name="Smith E.L."/>
            <person name="Johnson J."/>
        </authorList>
    </citation>
    <scope>PROTEIN SEQUENCE OF 2-136</scope>
    <scope>METHYLATION AT LYS-10 AND LYS-28</scope>
    <source>
        <tissue>Embryo</tissue>
    </source>
</reference>
<evidence type="ECO:0000250" key="1"/>
<evidence type="ECO:0000256" key="2">
    <source>
        <dbReference type="SAM" id="MobiDB-lite"/>
    </source>
</evidence>
<evidence type="ECO:0000269" key="3">
    <source>
    </source>
</evidence>
<evidence type="ECO:0000305" key="4"/>
<organism>
    <name type="scientific">Pisum sativum</name>
    <name type="common">Garden pea</name>
    <name type="synonym">Lathyrus oleraceus</name>
    <dbReference type="NCBI Taxonomy" id="3888"/>
    <lineage>
        <taxon>Eukaryota</taxon>
        <taxon>Viridiplantae</taxon>
        <taxon>Streptophyta</taxon>
        <taxon>Embryophyta</taxon>
        <taxon>Tracheophyta</taxon>
        <taxon>Spermatophyta</taxon>
        <taxon>Magnoliopsida</taxon>
        <taxon>eudicotyledons</taxon>
        <taxon>Gunneridae</taxon>
        <taxon>Pentapetalae</taxon>
        <taxon>rosids</taxon>
        <taxon>fabids</taxon>
        <taxon>Fabales</taxon>
        <taxon>Fabaceae</taxon>
        <taxon>Papilionoideae</taxon>
        <taxon>50 kb inversion clade</taxon>
        <taxon>NPAAA clade</taxon>
        <taxon>Hologalegina</taxon>
        <taxon>IRL clade</taxon>
        <taxon>Fabeae</taxon>
        <taxon>Pisum</taxon>
    </lineage>
</organism>
<feature type="initiator methionine" description="Removed" evidence="3">
    <location>
        <position position="1"/>
    </location>
</feature>
<feature type="chain" id="PRO_0000221291" description="Histone H3.2">
    <location>
        <begin position="2"/>
        <end position="136"/>
    </location>
</feature>
<feature type="region of interest" description="Disordered" evidence="2">
    <location>
        <begin position="1"/>
        <end position="43"/>
    </location>
</feature>
<feature type="modified residue" description="N6-methylated lysine" evidence="1">
    <location>
        <position position="5"/>
    </location>
</feature>
<feature type="modified residue" description="N6-acetyllysine; alternate" evidence="1">
    <location>
        <position position="10"/>
    </location>
</feature>
<feature type="modified residue" description="N6-methylated lysine; alternate" evidence="3">
    <location>
        <position position="10"/>
    </location>
</feature>
<feature type="modified residue" description="Phosphoserine" evidence="1">
    <location>
        <position position="11"/>
    </location>
</feature>
<feature type="modified residue" description="Phosphothreonine" evidence="1">
    <location>
        <position position="12"/>
    </location>
</feature>
<feature type="modified residue" description="N6-acetyllysine; alternate" evidence="1">
    <location>
        <position position="15"/>
    </location>
</feature>
<feature type="modified residue" description="N6-methylated lysine; alternate" evidence="1">
    <location>
        <position position="15"/>
    </location>
</feature>
<feature type="modified residue" description="N6-acetyllysine; alternate" evidence="1">
    <location>
        <position position="19"/>
    </location>
</feature>
<feature type="modified residue" description="N6-methylated lysine; alternate" evidence="1">
    <location>
        <position position="19"/>
    </location>
</feature>
<feature type="modified residue" description="N6-acetyllysine; alternate" evidence="1">
    <location>
        <position position="24"/>
    </location>
</feature>
<feature type="modified residue" description="N6-methylated lysine; alternate" evidence="1">
    <location>
        <position position="24"/>
    </location>
</feature>
<feature type="modified residue" description="N6-methylated lysine" evidence="3">
    <location>
        <position position="28"/>
    </location>
</feature>
<feature type="modified residue" description="Phosphoserine" evidence="1">
    <location>
        <position position="29"/>
    </location>
</feature>
<feature type="modified residue" description="N6-methylated lysine" evidence="1">
    <location>
        <position position="37"/>
    </location>
</feature>
<feature type="sequence variant" description="In 40% of the molecules.">
    <original>A</original>
    <variation>S</variation>
    <location>
        <position position="97"/>
    </location>
</feature>
<keyword id="KW-0007">Acetylation</keyword>
<keyword id="KW-0158">Chromosome</keyword>
<keyword id="KW-0903">Direct protein sequencing</keyword>
<keyword id="KW-0238">DNA-binding</keyword>
<keyword id="KW-0488">Methylation</keyword>
<keyword id="KW-0544">Nucleosome core</keyword>
<keyword id="KW-0539">Nucleus</keyword>
<keyword id="KW-0597">Phosphoprotein</keyword>
<dbReference type="PIR" id="A02631">
    <property type="entry name" value="HSPM3"/>
</dbReference>
<dbReference type="RefSeq" id="XP_050897165.1">
    <property type="nucleotide sequence ID" value="XM_051041208.1"/>
</dbReference>
<dbReference type="RefSeq" id="XP_050897167.1">
    <property type="nucleotide sequence ID" value="XM_051041210.1"/>
</dbReference>
<dbReference type="RefSeq" id="XP_050898428.1">
    <property type="nucleotide sequence ID" value="XM_051042471.1"/>
</dbReference>
<dbReference type="RefSeq" id="XP_050898429.1">
    <property type="nucleotide sequence ID" value="XM_051042472.1"/>
</dbReference>
<dbReference type="RefSeq" id="XP_050898430.1">
    <property type="nucleotide sequence ID" value="XM_051042473.1"/>
</dbReference>
<dbReference type="RefSeq" id="XP_050901410.1">
    <property type="nucleotide sequence ID" value="XM_051045453.1"/>
</dbReference>
<dbReference type="RefSeq" id="XP_050901653.1">
    <property type="nucleotide sequence ID" value="XM_051045696.1"/>
</dbReference>
<dbReference type="RefSeq" id="XP_050901654.1">
    <property type="nucleotide sequence ID" value="XM_051045697.1"/>
</dbReference>
<dbReference type="RefSeq" id="XP_050901797.1">
    <property type="nucleotide sequence ID" value="XM_051045840.1"/>
</dbReference>
<dbReference type="RefSeq" id="XP_050901904.1">
    <property type="nucleotide sequence ID" value="XM_051045947.1"/>
</dbReference>
<dbReference type="RefSeq" id="XP_050906023.1">
    <property type="nucleotide sequence ID" value="XM_051050066.1"/>
</dbReference>
<dbReference type="RefSeq" id="XP_050906024.1">
    <property type="nucleotide sequence ID" value="XM_051050067.1"/>
</dbReference>
<dbReference type="RefSeq" id="XP_050906025.1">
    <property type="nucleotide sequence ID" value="XM_051050068.1"/>
</dbReference>
<dbReference type="RefSeq" id="XP_050912852.1">
    <property type="nucleotide sequence ID" value="XM_051056895.1"/>
</dbReference>
<dbReference type="RefSeq" id="XP_050913949.1">
    <property type="nucleotide sequence ID" value="XM_051057992.1"/>
</dbReference>
<dbReference type="RefSeq" id="XP_050913950.1">
    <property type="nucleotide sequence ID" value="XM_051057993.1"/>
</dbReference>
<dbReference type="RefSeq" id="XP_050913952.1">
    <property type="nucleotide sequence ID" value="XM_051057995.1"/>
</dbReference>
<dbReference type="RefSeq" id="XP_050914037.1">
    <property type="nucleotide sequence ID" value="XM_051058080.1"/>
</dbReference>
<dbReference type="SMR" id="P68427"/>
<dbReference type="iPTMnet" id="P68427"/>
<dbReference type="EnsemblPlants" id="Psat0s1184g0040.1">
    <property type="protein sequence ID" value="Psat0s1184g0040.1.cds1"/>
    <property type="gene ID" value="Psat0s1184g0040"/>
</dbReference>
<dbReference type="EnsemblPlants" id="Psat0s3083g0160.1">
    <property type="protein sequence ID" value="Psat0s3083g0160.1.cds1"/>
    <property type="gene ID" value="Psat0s3083g0160"/>
</dbReference>
<dbReference type="EnsemblPlants" id="Psat2g137440.1">
    <property type="protein sequence ID" value="Psat2g137440.1.cds1"/>
    <property type="gene ID" value="Psat2g137440"/>
</dbReference>
<dbReference type="EnsemblPlants" id="Psat2g137480.1">
    <property type="protein sequence ID" value="Psat2g137480.1.cds1"/>
    <property type="gene ID" value="Psat2g137480"/>
</dbReference>
<dbReference type="EnsemblPlants" id="Psat3g140320.1">
    <property type="protein sequence ID" value="Psat3g140320.1.cds1"/>
    <property type="gene ID" value="Psat3g140320"/>
</dbReference>
<dbReference type="EnsemblPlants" id="Psat3g201160.1">
    <property type="protein sequence ID" value="Psat3g201160.1.cds1"/>
    <property type="gene ID" value="Psat3g201160"/>
</dbReference>
<dbReference type="EnsemblPlants" id="Psat3g201960.1">
    <property type="protein sequence ID" value="Psat3g201960.1.cds1"/>
    <property type="gene ID" value="Psat3g201960"/>
</dbReference>
<dbReference type="EnsemblPlants" id="Psat3g202080.1">
    <property type="protein sequence ID" value="Psat3g202080.1.cds1"/>
    <property type="gene ID" value="Psat3g202080"/>
</dbReference>
<dbReference type="EnsemblPlants" id="Psat3g202120.1">
    <property type="protein sequence ID" value="Psat3g202120.1.cds1"/>
    <property type="gene ID" value="Psat3g202120"/>
</dbReference>
<dbReference type="EnsemblPlants" id="Psat3g202160.1">
    <property type="protein sequence ID" value="Psat3g202160.1.cds1"/>
    <property type="gene ID" value="Psat3g202160"/>
</dbReference>
<dbReference type="EnsemblPlants" id="Psat3g202200.1">
    <property type="protein sequence ID" value="Psat3g202200.1.cds1"/>
    <property type="gene ID" value="Psat3g202200"/>
</dbReference>
<dbReference type="EnsemblPlants" id="Psat7g049600.1">
    <property type="protein sequence ID" value="Psat7g049600.1.cds1"/>
    <property type="gene ID" value="Psat7g049600"/>
</dbReference>
<dbReference type="EnsemblPlants" id="Psat7g051240.1">
    <property type="protein sequence ID" value="Psat7g051240.1.cds1"/>
    <property type="gene ID" value="Psat7g051240"/>
</dbReference>
<dbReference type="EnsemblPlants" id="Psat7g051240.2">
    <property type="protein sequence ID" value="Psat7g051240.2.cds1"/>
    <property type="gene ID" value="Psat7g051240"/>
</dbReference>
<dbReference type="EnsemblPlants" id="Psat7g051240.3">
    <property type="protein sequence ID" value="Psat7g051240.3.cds1"/>
    <property type="gene ID" value="Psat7g051240"/>
</dbReference>
<dbReference type="EnsemblPlants" id="Psat7g117560.1">
    <property type="protein sequence ID" value="Psat7g117560.1.cds1"/>
    <property type="gene ID" value="Psat7g117560"/>
</dbReference>
<dbReference type="EnsemblPlants" id="Psat7g117640.1">
    <property type="protein sequence ID" value="Psat7g117640.1.cds1"/>
    <property type="gene ID" value="Psat7g117640"/>
</dbReference>
<dbReference type="EnsemblPlants" id="Psat7g117680.1">
    <property type="protein sequence ID" value="Psat7g117680.1.cds1"/>
    <property type="gene ID" value="Psat7g117680"/>
</dbReference>
<dbReference type="EnsemblPlants" id="Psat7g237080.1">
    <property type="protein sequence ID" value="Psat7g237080.1.cds1"/>
    <property type="gene ID" value="Psat7g237080"/>
</dbReference>
<dbReference type="GeneID" id="127103981"/>
<dbReference type="GeneID" id="127103982"/>
<dbReference type="GeneID" id="127105304"/>
<dbReference type="GeneID" id="127105305"/>
<dbReference type="GeneID" id="127105306"/>
<dbReference type="GeneID" id="127108084"/>
<dbReference type="GeneID" id="127108257"/>
<dbReference type="GeneID" id="127108258"/>
<dbReference type="GeneID" id="127108375"/>
<dbReference type="GeneID" id="127108476"/>
<dbReference type="GeneID" id="127119759"/>
<dbReference type="GeneID" id="127119760"/>
<dbReference type="GeneID" id="127119761"/>
<dbReference type="GeneID" id="127127636"/>
<dbReference type="GeneID" id="127128626"/>
<dbReference type="GeneID" id="127128627"/>
<dbReference type="GeneID" id="127128629"/>
<dbReference type="GeneID" id="127128703"/>
<dbReference type="Gramene" id="Psat0s1184g0040.1">
    <property type="protein sequence ID" value="Psat0s1184g0040.1.cds1"/>
    <property type="gene ID" value="Psat0s1184g0040"/>
</dbReference>
<dbReference type="Gramene" id="Psat0s3083g0160.1">
    <property type="protein sequence ID" value="Psat0s3083g0160.1.cds1"/>
    <property type="gene ID" value="Psat0s3083g0160"/>
</dbReference>
<dbReference type="Gramene" id="Psat2g137440.1">
    <property type="protein sequence ID" value="Psat2g137440.1.cds1"/>
    <property type="gene ID" value="Psat2g137440"/>
</dbReference>
<dbReference type="Gramene" id="Psat2g137480.1">
    <property type="protein sequence ID" value="Psat2g137480.1.cds1"/>
    <property type="gene ID" value="Psat2g137480"/>
</dbReference>
<dbReference type="Gramene" id="Psat3g140320.1">
    <property type="protein sequence ID" value="Psat3g140320.1.cds1"/>
    <property type="gene ID" value="Psat3g140320"/>
</dbReference>
<dbReference type="Gramene" id="Psat3g201160.1">
    <property type="protein sequence ID" value="Psat3g201160.1.cds1"/>
    <property type="gene ID" value="Psat3g201160"/>
</dbReference>
<dbReference type="Gramene" id="Psat3g201960.1">
    <property type="protein sequence ID" value="Psat3g201960.1.cds1"/>
    <property type="gene ID" value="Psat3g201960"/>
</dbReference>
<dbReference type="Gramene" id="Psat3g202080.1">
    <property type="protein sequence ID" value="Psat3g202080.1.cds1"/>
    <property type="gene ID" value="Psat3g202080"/>
</dbReference>
<dbReference type="Gramene" id="Psat3g202120.1">
    <property type="protein sequence ID" value="Psat3g202120.1.cds1"/>
    <property type="gene ID" value="Psat3g202120"/>
</dbReference>
<dbReference type="Gramene" id="Psat3g202160.1">
    <property type="protein sequence ID" value="Psat3g202160.1.cds1"/>
    <property type="gene ID" value="Psat3g202160"/>
</dbReference>
<dbReference type="Gramene" id="Psat3g202200.1">
    <property type="protein sequence ID" value="Psat3g202200.1.cds1"/>
    <property type="gene ID" value="Psat3g202200"/>
</dbReference>
<dbReference type="Gramene" id="Psat7g049600.1">
    <property type="protein sequence ID" value="Psat7g049600.1.cds1"/>
    <property type="gene ID" value="Psat7g049600"/>
</dbReference>
<dbReference type="Gramene" id="Psat7g051240.1">
    <property type="protein sequence ID" value="Psat7g051240.1.cds1"/>
    <property type="gene ID" value="Psat7g051240"/>
</dbReference>
<dbReference type="Gramene" id="Psat7g051240.2">
    <property type="protein sequence ID" value="Psat7g051240.2.cds1"/>
    <property type="gene ID" value="Psat7g051240"/>
</dbReference>
<dbReference type="Gramene" id="Psat7g051240.3">
    <property type="protein sequence ID" value="Psat7g051240.3.cds1"/>
    <property type="gene ID" value="Psat7g051240"/>
</dbReference>
<dbReference type="Gramene" id="Psat7g117560.1">
    <property type="protein sequence ID" value="Psat7g117560.1.cds1"/>
    <property type="gene ID" value="Psat7g117560"/>
</dbReference>
<dbReference type="Gramene" id="Psat7g117640.1">
    <property type="protein sequence ID" value="Psat7g117640.1.cds1"/>
    <property type="gene ID" value="Psat7g117640"/>
</dbReference>
<dbReference type="Gramene" id="Psat7g117680.1">
    <property type="protein sequence ID" value="Psat7g117680.1.cds1"/>
    <property type="gene ID" value="Psat7g117680"/>
</dbReference>
<dbReference type="Gramene" id="Psat7g237080.1">
    <property type="protein sequence ID" value="Psat7g237080.1.cds1"/>
    <property type="gene ID" value="Psat7g237080"/>
</dbReference>
<dbReference type="OrthoDB" id="1379193at2759"/>
<dbReference type="GO" id="GO:0000786">
    <property type="term" value="C:nucleosome"/>
    <property type="evidence" value="ECO:0007669"/>
    <property type="project" value="UniProtKB-KW"/>
</dbReference>
<dbReference type="GO" id="GO:0005634">
    <property type="term" value="C:nucleus"/>
    <property type="evidence" value="ECO:0007669"/>
    <property type="project" value="UniProtKB-SubCell"/>
</dbReference>
<dbReference type="GO" id="GO:0003677">
    <property type="term" value="F:DNA binding"/>
    <property type="evidence" value="ECO:0007669"/>
    <property type="project" value="UniProtKB-KW"/>
</dbReference>
<dbReference type="GO" id="GO:0046982">
    <property type="term" value="F:protein heterodimerization activity"/>
    <property type="evidence" value="ECO:0007669"/>
    <property type="project" value="InterPro"/>
</dbReference>
<dbReference type="GO" id="GO:0030527">
    <property type="term" value="F:structural constituent of chromatin"/>
    <property type="evidence" value="ECO:0007669"/>
    <property type="project" value="InterPro"/>
</dbReference>
<dbReference type="CDD" id="cd22911">
    <property type="entry name" value="HFD_H3"/>
    <property type="match status" value="1"/>
</dbReference>
<dbReference type="FunFam" id="1.10.20.10:FF:000078">
    <property type="entry name" value="Histone H3"/>
    <property type="match status" value="1"/>
</dbReference>
<dbReference type="FunFam" id="1.10.20.10:FF:000044">
    <property type="entry name" value="Histone H3.3"/>
    <property type="match status" value="1"/>
</dbReference>
<dbReference type="Gene3D" id="1.10.20.10">
    <property type="entry name" value="Histone, subunit A"/>
    <property type="match status" value="1"/>
</dbReference>
<dbReference type="InterPro" id="IPR009072">
    <property type="entry name" value="Histone-fold"/>
</dbReference>
<dbReference type="InterPro" id="IPR007125">
    <property type="entry name" value="Histone_H2A/H2B/H3"/>
</dbReference>
<dbReference type="InterPro" id="IPR000164">
    <property type="entry name" value="Histone_H3/CENP-A"/>
</dbReference>
<dbReference type="PANTHER" id="PTHR11426">
    <property type="entry name" value="HISTONE H3"/>
    <property type="match status" value="1"/>
</dbReference>
<dbReference type="Pfam" id="PF00125">
    <property type="entry name" value="Histone"/>
    <property type="match status" value="1"/>
</dbReference>
<dbReference type="PRINTS" id="PR00622">
    <property type="entry name" value="HISTONEH3"/>
</dbReference>
<dbReference type="SMART" id="SM00428">
    <property type="entry name" value="H3"/>
    <property type="match status" value="1"/>
</dbReference>
<dbReference type="SUPFAM" id="SSF47113">
    <property type="entry name" value="Histone-fold"/>
    <property type="match status" value="1"/>
</dbReference>
<dbReference type="PROSITE" id="PS00322">
    <property type="entry name" value="HISTONE_H3_1"/>
    <property type="match status" value="1"/>
</dbReference>
<dbReference type="PROSITE" id="PS00959">
    <property type="entry name" value="HISTONE_H3_2"/>
    <property type="match status" value="1"/>
</dbReference>
<comment type="function">
    <text>Core component of nucleosome. Nucleosomes wrap and compact DNA into chromatin, limiting DNA accessibility to the cellular machineries which require DNA as a template. Histones thereby play a central role in transcription regulation, DNA repair, DNA replication and chromosomal stability. DNA accessibility is regulated via a complex set of post-translational modifications of histones, also called histone code, and nucleosome remodeling.</text>
</comment>
<comment type="subunit">
    <text>The nucleosome is a histone octamer containing two molecules each of H2A, H2B, H3 and H4 assembled in one H3-H4 heterotetramer and two H2A-H2B heterodimers. The octamer wraps approximately 147 bp of DNA.</text>
</comment>
<comment type="subcellular location">
    <subcellularLocation>
        <location>Nucleus</location>
    </subcellularLocation>
    <subcellularLocation>
        <location>Chromosome</location>
    </subcellularLocation>
</comment>
<comment type="PTM">
    <text evidence="1">Acetylation is generally linked to gene activation. Can be acetylated to form H3K9ac, H3K14ac, H3K18ac and H3K23ac. H3K9ac could compete with H3K9me and prevent gene silencing. H3K9ac is restricted to euchromatin (By similarity).</text>
</comment>
<comment type="PTM">
    <text evidence="1">Methylated to form mainly H3K4me, H3K9me, H3K18me, H3K23me, H3K27me and H3K36me. H3K4me1/2/3, H3K9me3, H3K27me3 and H3K36me1/2/3 are typical marks for euchromatin, whereas heterochromatic chromocenters are enriched in H3K9me1/2 and H3K27me1/2. H2BK143ub1 is probably prerequisite for H3K4me (By similarity).</text>
</comment>
<comment type="PTM">
    <text evidence="1">Can be phosphorylated to form H3S10ph, H3T11ph and H3S28ph.</text>
</comment>
<comment type="similarity">
    <text evidence="4">Belongs to the histone H3 family.</text>
</comment>
<comment type="caution">
    <text evidence="4">To ensure consistency between histone entries, we follow the 'Brno' nomenclature for histone modifications, with positions referring to those used in the literature for the 'closest' model organism. Due to slight variations in histone sequences between organisms and to the presence of initiator methionine in UniProtKB/Swiss-Prot sequences, the actual positions of modified amino acids in the sequence generally differ. In this entry the following conventions are used: H3K4me = methylated Lys-5; H3K9ac = acetylated Lys-10; H3K9me = methylated Lys-10; H3S10ph = phosphorylated Ser-11; H3T11ph = phosphorylated Thr-12; H3K14ac = acetylated Lys-15; H3K14me = methylated Lys-14; H3K18ac = acetylated Lys-19; H3K18me = methylated Lys-19; H3K23ac = acetylated Lys-24; H3K23me = methylated Lys-24; H3K27me = methylated Lys-28; H3S28ph = phosphorylated Ser-29; H3K36me = methylated Lys-37.</text>
</comment>
<proteinExistence type="evidence at protein level"/>
<name>H32_PEA</name>
<sequence length="136" mass="15284">MARTKQTARKSTGGKAPRKQLATKAARKSAPATGGVKKPHRFRPGTVALREIRKYQKSTELLIRKLPFQRLVREIAQDFKTDLRFQSSAVSALQEAAEAYLVGLFEDTNLCAIHAKRVTIMPKDIQLARRIRGERA</sequence>